<dbReference type="EMBL" id="X90709">
    <property type="protein sequence ID" value="CAA62239.1"/>
    <property type="molecule type" value="Genomic_DNA"/>
</dbReference>
<dbReference type="PIR" id="JC4738">
    <property type="entry name" value="JC4738"/>
</dbReference>
<dbReference type="SMR" id="Q45551"/>
<dbReference type="GO" id="GO:0005524">
    <property type="term" value="F:ATP binding"/>
    <property type="evidence" value="ECO:0007669"/>
    <property type="project" value="UniProtKB-UniRule"/>
</dbReference>
<dbReference type="GO" id="GO:0140662">
    <property type="term" value="F:ATP-dependent protein folding chaperone"/>
    <property type="evidence" value="ECO:0007669"/>
    <property type="project" value="InterPro"/>
</dbReference>
<dbReference type="GO" id="GO:0051082">
    <property type="term" value="F:unfolded protein binding"/>
    <property type="evidence" value="ECO:0007669"/>
    <property type="project" value="InterPro"/>
</dbReference>
<dbReference type="CDD" id="cd10234">
    <property type="entry name" value="ASKHA_NBD_HSP70_DnaK-like"/>
    <property type="match status" value="1"/>
</dbReference>
<dbReference type="FunFam" id="2.60.34.10:FF:000014">
    <property type="entry name" value="Chaperone protein DnaK HSP70"/>
    <property type="match status" value="1"/>
</dbReference>
<dbReference type="FunFam" id="3.30.420.40:FF:000020">
    <property type="entry name" value="Chaperone protein HscA homolog"/>
    <property type="match status" value="1"/>
</dbReference>
<dbReference type="FunFam" id="3.30.420.40:FF:000545">
    <property type="entry name" value="Endoplasmic reticulum chaperone BiP"/>
    <property type="match status" value="1"/>
</dbReference>
<dbReference type="FunFam" id="1.20.1270.10:FF:000004">
    <property type="entry name" value="Molecular chaperone DnaK"/>
    <property type="match status" value="1"/>
</dbReference>
<dbReference type="FunFam" id="3.90.640.10:FF:000003">
    <property type="entry name" value="Molecular chaperone DnaK"/>
    <property type="match status" value="1"/>
</dbReference>
<dbReference type="Gene3D" id="1.20.1270.10">
    <property type="match status" value="1"/>
</dbReference>
<dbReference type="Gene3D" id="3.30.420.40">
    <property type="match status" value="2"/>
</dbReference>
<dbReference type="Gene3D" id="3.90.640.10">
    <property type="entry name" value="Actin, Chain A, domain 4"/>
    <property type="match status" value="1"/>
</dbReference>
<dbReference type="Gene3D" id="2.60.34.10">
    <property type="entry name" value="Substrate Binding Domain Of DNAk, Chain A, domain 1"/>
    <property type="match status" value="1"/>
</dbReference>
<dbReference type="HAMAP" id="MF_00332">
    <property type="entry name" value="DnaK"/>
    <property type="match status" value="1"/>
</dbReference>
<dbReference type="InterPro" id="IPR043129">
    <property type="entry name" value="ATPase_NBD"/>
</dbReference>
<dbReference type="InterPro" id="IPR012725">
    <property type="entry name" value="Chaperone_DnaK"/>
</dbReference>
<dbReference type="InterPro" id="IPR018181">
    <property type="entry name" value="Heat_shock_70_CS"/>
</dbReference>
<dbReference type="InterPro" id="IPR029048">
    <property type="entry name" value="HSP70_C_sf"/>
</dbReference>
<dbReference type="InterPro" id="IPR029047">
    <property type="entry name" value="HSP70_peptide-bd_sf"/>
</dbReference>
<dbReference type="InterPro" id="IPR013126">
    <property type="entry name" value="Hsp_70_fam"/>
</dbReference>
<dbReference type="NCBIfam" id="NF001413">
    <property type="entry name" value="PRK00290.1"/>
    <property type="match status" value="1"/>
</dbReference>
<dbReference type="NCBIfam" id="TIGR02350">
    <property type="entry name" value="prok_dnaK"/>
    <property type="match status" value="1"/>
</dbReference>
<dbReference type="PANTHER" id="PTHR19375">
    <property type="entry name" value="HEAT SHOCK PROTEIN 70KDA"/>
    <property type="match status" value="1"/>
</dbReference>
<dbReference type="Pfam" id="PF00012">
    <property type="entry name" value="HSP70"/>
    <property type="match status" value="1"/>
</dbReference>
<dbReference type="PRINTS" id="PR00301">
    <property type="entry name" value="HEATSHOCK70"/>
</dbReference>
<dbReference type="SUPFAM" id="SSF53067">
    <property type="entry name" value="Actin-like ATPase domain"/>
    <property type="match status" value="2"/>
</dbReference>
<dbReference type="SUPFAM" id="SSF100934">
    <property type="entry name" value="Heat shock protein 70kD (HSP70), C-terminal subdomain"/>
    <property type="match status" value="1"/>
</dbReference>
<dbReference type="SUPFAM" id="SSF100920">
    <property type="entry name" value="Heat shock protein 70kD (HSP70), peptide-binding domain"/>
    <property type="match status" value="1"/>
</dbReference>
<dbReference type="PROSITE" id="PS00297">
    <property type="entry name" value="HSP70_1"/>
    <property type="match status" value="1"/>
</dbReference>
<dbReference type="PROSITE" id="PS00329">
    <property type="entry name" value="HSP70_2"/>
    <property type="match status" value="1"/>
</dbReference>
<dbReference type="PROSITE" id="PS01036">
    <property type="entry name" value="HSP70_3"/>
    <property type="match status" value="1"/>
</dbReference>
<proteinExistence type="inferred from homology"/>
<comment type="function">
    <text evidence="1">Acts as a chaperone.</text>
</comment>
<comment type="induction">
    <text evidence="1">By stress conditions e.g. heat shock (By similarity).</text>
</comment>
<comment type="similarity">
    <text evidence="3">Belongs to the heat shock protein 70 family.</text>
</comment>
<reference key="1">
    <citation type="journal article" date="1996" name="Gene">
        <title>Cloning and sequencing of the dnaK operon of Bacillus stearothermophilus.</title>
        <authorList>
            <person name="Herbort M."/>
            <person name="Schoen U."/>
            <person name="Lang J."/>
            <person name="Schumann W."/>
        </authorList>
    </citation>
    <scope>NUCLEOTIDE SEQUENCE [GENOMIC DNA]</scope>
    <source>
        <strain>NUB36</strain>
    </source>
</reference>
<keyword id="KW-0067">ATP-binding</keyword>
<keyword id="KW-0143">Chaperone</keyword>
<keyword id="KW-0547">Nucleotide-binding</keyword>
<keyword id="KW-0597">Phosphoprotein</keyword>
<keyword id="KW-0346">Stress response</keyword>
<accession>Q45551</accession>
<feature type="initiator methionine" description="Removed" evidence="1">
    <location>
        <position position="1"/>
    </location>
</feature>
<feature type="chain" id="PRO_0000078419" description="Chaperone protein DnaK">
    <location>
        <begin position="2"/>
        <end position="608"/>
    </location>
</feature>
<feature type="region of interest" description="Disordered" evidence="2">
    <location>
        <begin position="576"/>
        <end position="608"/>
    </location>
</feature>
<feature type="compositionally biased region" description="Low complexity" evidence="2">
    <location>
        <begin position="576"/>
        <end position="586"/>
    </location>
</feature>
<feature type="compositionally biased region" description="Acidic residues" evidence="2">
    <location>
        <begin position="596"/>
        <end position="608"/>
    </location>
</feature>
<feature type="modified residue" description="Phosphothreonine; by autocatalysis" evidence="1">
    <location>
        <position position="172"/>
    </location>
</feature>
<gene>
    <name type="primary">dnaK</name>
</gene>
<sequence>MSKIIGIDLGTTNSCVAVLEGGEPKVIPNPEGNRTTPSVVAFKNGERLVGEVAKRQAITNPNTVISIKRHMGTDYKVEIEGKKYTPQEISAIILQYLKSYAEDYLGEPVTRAVITVPAYFNDAQRQATKDAGRIAGLEVERIINEPTAAALAYGLDKEEDQTILVYDLGGGTFDVSILELGDGVFEVKATAGDNHLGGDDFDQVIIDYLVDQFKQEHGIDLSKDKMALQRLKDAAEKAKKELSGVTQTQISLPFISANENGPLHLETTLTRAKFEELFAHLVERTMGPVRQALQDAGLTPEDIDKIILVGGSTRIPAVQEAIKRELGKEPHKGVNPDEVVAIGAAIQGGVIAGEVKDVVLLDVTPLSLGIETMGGVFTKLIERNTTIPTSKSQIFTTAADNQTTVDIHVLQGERPMAADNKTLGRFQLTGYPPAPRGVPQIEVTFDIDANGIVHVRAKDLGTNKEQSITIKSSSGLSEEEIQRMIKEAEENAEADRKRKEAAELRNEADQLIFTTEKTLKEVEGKVDEAEVKKAREAKDALKAALEKNDLDEIRKKKEALQEAVQQLSIKLYEQAAKQAQNQQAGADGATKKDDNIVDAEFEEVKDDK</sequence>
<organism>
    <name type="scientific">Geobacillus stearothermophilus</name>
    <name type="common">Bacillus stearothermophilus</name>
    <dbReference type="NCBI Taxonomy" id="1422"/>
    <lineage>
        <taxon>Bacteria</taxon>
        <taxon>Bacillati</taxon>
        <taxon>Bacillota</taxon>
        <taxon>Bacilli</taxon>
        <taxon>Bacillales</taxon>
        <taxon>Anoxybacillaceae</taxon>
        <taxon>Geobacillus</taxon>
    </lineage>
</organism>
<evidence type="ECO:0000250" key="1"/>
<evidence type="ECO:0000256" key="2">
    <source>
        <dbReference type="SAM" id="MobiDB-lite"/>
    </source>
</evidence>
<evidence type="ECO:0000305" key="3"/>
<name>DNAK_GEOSE</name>
<protein>
    <recommendedName>
        <fullName>Chaperone protein DnaK</fullName>
    </recommendedName>
    <alternativeName>
        <fullName>HSP70</fullName>
    </alternativeName>
    <alternativeName>
        <fullName>Heat shock 70 kDa protein</fullName>
    </alternativeName>
    <alternativeName>
        <fullName>Heat shock protein 70</fullName>
    </alternativeName>
</protein>